<evidence type="ECO:0000255" key="1">
    <source>
        <dbReference type="HAMAP-Rule" id="MF_01442"/>
    </source>
</evidence>
<evidence type="ECO:0000305" key="2">
    <source ref="2"/>
</evidence>
<evidence type="ECO:0007829" key="3">
    <source>
        <dbReference type="PDB" id="1T0T"/>
    </source>
</evidence>
<gene>
    <name evidence="1" type="primary">chdC</name>
    <name type="ordered locus">GK3416</name>
</gene>
<accession>Q5KUD5</accession>
<dbReference type="EC" id="1.3.98.5" evidence="1"/>
<dbReference type="EMBL" id="BA000043">
    <property type="protein sequence ID" value="BAD77701.1"/>
    <property type="molecule type" value="Genomic_DNA"/>
</dbReference>
<dbReference type="PDB" id="1T0T">
    <property type="method" value="X-ray"/>
    <property type="resolution" value="1.75 A"/>
    <property type="chains" value="V/W/X/Y/Z=1-248"/>
</dbReference>
<dbReference type="PDBsum" id="1T0T"/>
<dbReference type="SMR" id="Q5KUD5"/>
<dbReference type="STRING" id="235909.GK3416"/>
<dbReference type="KEGG" id="gka:GK3416"/>
<dbReference type="eggNOG" id="COG3253">
    <property type="taxonomic scope" value="Bacteria"/>
</dbReference>
<dbReference type="HOGENOM" id="CLU_063226_1_0_9"/>
<dbReference type="UniPathway" id="UPA00252"/>
<dbReference type="EvolutionaryTrace" id="Q5KUD5"/>
<dbReference type="Proteomes" id="UP000001172">
    <property type="component" value="Chromosome"/>
</dbReference>
<dbReference type="GO" id="GO:0020037">
    <property type="term" value="F:heme binding"/>
    <property type="evidence" value="ECO:0007669"/>
    <property type="project" value="InterPro"/>
</dbReference>
<dbReference type="GO" id="GO:0046872">
    <property type="term" value="F:metal ion binding"/>
    <property type="evidence" value="ECO:0007669"/>
    <property type="project" value="UniProtKB-KW"/>
</dbReference>
<dbReference type="GO" id="GO:0016634">
    <property type="term" value="F:oxidoreductase activity, acting on the CH-CH group of donors, oxygen as acceptor"/>
    <property type="evidence" value="ECO:0007669"/>
    <property type="project" value="UniProtKB-UniRule"/>
</dbReference>
<dbReference type="GO" id="GO:0004601">
    <property type="term" value="F:peroxidase activity"/>
    <property type="evidence" value="ECO:0007669"/>
    <property type="project" value="InterPro"/>
</dbReference>
<dbReference type="GO" id="GO:0006785">
    <property type="term" value="P:heme B biosynthetic process"/>
    <property type="evidence" value="ECO:0007669"/>
    <property type="project" value="UniProtKB-UniRule"/>
</dbReference>
<dbReference type="Gene3D" id="3.30.70.1030">
    <property type="entry name" value="Apc35880, domain 1"/>
    <property type="match status" value="2"/>
</dbReference>
<dbReference type="HAMAP" id="MF_01442">
    <property type="entry name" value="Coproheme_decarbox_1"/>
    <property type="match status" value="1"/>
</dbReference>
<dbReference type="InterPro" id="IPR031332">
    <property type="entry name" value="CHDC"/>
</dbReference>
<dbReference type="InterPro" id="IPR010644">
    <property type="entry name" value="ChdC/CLD"/>
</dbReference>
<dbReference type="InterPro" id="IPR011008">
    <property type="entry name" value="Dimeric_a/b-barrel"/>
</dbReference>
<dbReference type="NCBIfam" id="NF008913">
    <property type="entry name" value="PRK12276.1"/>
    <property type="match status" value="1"/>
</dbReference>
<dbReference type="PANTHER" id="PTHR36843:SF1">
    <property type="entry name" value="COPROHEME DECARBOXYLASE"/>
    <property type="match status" value="1"/>
</dbReference>
<dbReference type="PANTHER" id="PTHR36843">
    <property type="entry name" value="HEME-DEPENDENT PEROXIDASE YWFI-RELATED"/>
    <property type="match status" value="1"/>
</dbReference>
<dbReference type="Pfam" id="PF06778">
    <property type="entry name" value="Chlor_dismutase"/>
    <property type="match status" value="1"/>
</dbReference>
<dbReference type="SUPFAM" id="SSF54909">
    <property type="entry name" value="Dimeric alpha+beta barrel"/>
    <property type="match status" value="1"/>
</dbReference>
<organism>
    <name type="scientific">Geobacillus kaustophilus (strain HTA426)</name>
    <dbReference type="NCBI Taxonomy" id="235909"/>
    <lineage>
        <taxon>Bacteria</taxon>
        <taxon>Bacillati</taxon>
        <taxon>Bacillota</taxon>
        <taxon>Bacilli</taxon>
        <taxon>Bacillales</taxon>
        <taxon>Anoxybacillaceae</taxon>
        <taxon>Geobacillus</taxon>
        <taxon>Geobacillus thermoleovorans group</taxon>
    </lineage>
</organism>
<protein>
    <recommendedName>
        <fullName evidence="1">Coproheme decarboxylase</fullName>
        <ecNumber evidence="1">1.3.98.5</ecNumber>
    </recommendedName>
    <alternativeName>
        <fullName evidence="1">Coproheme III oxidative decarboxylase</fullName>
    </alternativeName>
    <alternativeName>
        <fullName evidence="1">Hydrogen peroxide-dependent heme synthase</fullName>
    </alternativeName>
</protein>
<comment type="function">
    <text evidence="1">Involved in coproporphyrin-dependent heme b biosynthesis. Catalyzes the decarboxylation of Fe-coproporphyrin III (coproheme) to heme b (protoheme IX), the last step of the pathway. The reaction occurs in a stepwise manner with a three-propionate intermediate.</text>
</comment>
<comment type="catalytic activity">
    <reaction evidence="1">
        <text>Fe-coproporphyrin III + 2 H2O2 + 2 H(+) = heme b + 2 CO2 + 4 H2O</text>
        <dbReference type="Rhea" id="RHEA:56516"/>
        <dbReference type="ChEBI" id="CHEBI:15377"/>
        <dbReference type="ChEBI" id="CHEBI:15378"/>
        <dbReference type="ChEBI" id="CHEBI:16240"/>
        <dbReference type="ChEBI" id="CHEBI:16526"/>
        <dbReference type="ChEBI" id="CHEBI:60344"/>
        <dbReference type="ChEBI" id="CHEBI:68438"/>
        <dbReference type="EC" id="1.3.98.5"/>
    </reaction>
    <physiologicalReaction direction="left-to-right" evidence="1">
        <dbReference type="Rhea" id="RHEA:56517"/>
    </physiologicalReaction>
</comment>
<comment type="catalytic activity">
    <reaction evidence="1">
        <text>Fe-coproporphyrin III + H2O2 + H(+) = harderoheme III + CO2 + 2 H2O</text>
        <dbReference type="Rhea" id="RHEA:57940"/>
        <dbReference type="ChEBI" id="CHEBI:15377"/>
        <dbReference type="ChEBI" id="CHEBI:15378"/>
        <dbReference type="ChEBI" id="CHEBI:16240"/>
        <dbReference type="ChEBI" id="CHEBI:16526"/>
        <dbReference type="ChEBI" id="CHEBI:68438"/>
        <dbReference type="ChEBI" id="CHEBI:142463"/>
    </reaction>
    <physiologicalReaction direction="left-to-right" evidence="1">
        <dbReference type="Rhea" id="RHEA:57941"/>
    </physiologicalReaction>
</comment>
<comment type="catalytic activity">
    <reaction evidence="1">
        <text>harderoheme III + H2O2 + H(+) = heme b + CO2 + 2 H2O</text>
        <dbReference type="Rhea" id="RHEA:57944"/>
        <dbReference type="ChEBI" id="CHEBI:15377"/>
        <dbReference type="ChEBI" id="CHEBI:15378"/>
        <dbReference type="ChEBI" id="CHEBI:16240"/>
        <dbReference type="ChEBI" id="CHEBI:16526"/>
        <dbReference type="ChEBI" id="CHEBI:60344"/>
        <dbReference type="ChEBI" id="CHEBI:142463"/>
    </reaction>
    <physiologicalReaction direction="left-to-right" evidence="1">
        <dbReference type="Rhea" id="RHEA:57945"/>
    </physiologicalReaction>
</comment>
<comment type="cofactor">
    <cofactor evidence="1">
        <name>Fe-coproporphyrin III</name>
        <dbReference type="ChEBI" id="CHEBI:68438"/>
    </cofactor>
    <text evidence="1">Fe-coproporphyrin III acts both as a substrate and a redox cofactor.</text>
</comment>
<comment type="pathway">
    <text evidence="1">Porphyrin-containing compound metabolism; protoheme biosynthesis.</text>
</comment>
<comment type="subunit">
    <text evidence="2">Homopentamer.</text>
</comment>
<comment type="similarity">
    <text evidence="1">Belongs to the ChdC family. Type 1 subfamily.</text>
</comment>
<reference key="1">
    <citation type="journal article" date="2004" name="Nucleic Acids Res.">
        <title>Thermoadaptation trait revealed by the genome sequence of thermophilic Geobacillus kaustophilus.</title>
        <authorList>
            <person name="Takami H."/>
            <person name="Takaki Y."/>
            <person name="Chee G.-J."/>
            <person name="Nishi S."/>
            <person name="Shimamura S."/>
            <person name="Suzuki H."/>
            <person name="Matsui S."/>
            <person name="Uchiyama I."/>
        </authorList>
    </citation>
    <scope>NUCLEOTIDE SEQUENCE [LARGE SCALE GENOMIC DNA]</scope>
    <source>
        <strain>HTA426</strain>
    </source>
</reference>
<reference key="2">
    <citation type="submission" date="2004-04" db="PDB data bank">
        <title>Crystal structure of APC35880 protein from Bacillus stearothermophilus.</title>
        <authorList>
            <consortium name="Midwest center for structural genomics (MCSG)"/>
        </authorList>
    </citation>
    <scope>X-RAY CRYSTALLOGRAPHY (1.75 ANGSTROMS)</scope>
    <scope>SUBUNIT</scope>
</reference>
<name>CHDC_GEOKA</name>
<feature type="chain" id="PRO_0000294038" description="Coproheme decarboxylase">
    <location>
        <begin position="1"/>
        <end position="248"/>
    </location>
</feature>
<feature type="active site" evidence="1">
    <location>
        <position position="144"/>
    </location>
</feature>
<feature type="binding site" evidence="1">
    <location>
        <position position="130"/>
    </location>
    <ligand>
        <name>Fe-coproporphyrin III</name>
        <dbReference type="ChEBI" id="CHEBI:68438"/>
    </ligand>
</feature>
<feature type="binding site" evidence="1">
    <location>
        <begin position="144"/>
        <end position="148"/>
    </location>
    <ligand>
        <name>Fe-coproporphyrin III</name>
        <dbReference type="ChEBI" id="CHEBI:68438"/>
    </ligand>
</feature>
<feature type="binding site" description="axial binding residue" evidence="1">
    <location>
        <position position="171"/>
    </location>
    <ligand>
        <name>Fe-coproporphyrin III</name>
        <dbReference type="ChEBI" id="CHEBI:68438"/>
    </ligand>
    <ligandPart>
        <name>Fe</name>
        <dbReference type="ChEBI" id="CHEBI:18248"/>
    </ligandPart>
</feature>
<feature type="binding site" evidence="1">
    <location>
        <position position="184"/>
    </location>
    <ligand>
        <name>Fe-coproporphyrin III</name>
        <dbReference type="ChEBI" id="CHEBI:68438"/>
    </ligand>
</feature>
<feature type="binding site" evidence="1">
    <location>
        <position position="222"/>
    </location>
    <ligand>
        <name>Fe-coproporphyrin III</name>
        <dbReference type="ChEBI" id="CHEBI:68438"/>
    </ligand>
</feature>
<feature type="strand" evidence="3">
    <location>
        <begin position="8"/>
        <end position="20"/>
    </location>
</feature>
<feature type="helix" evidence="3">
    <location>
        <begin position="22"/>
        <end position="27"/>
    </location>
</feature>
<feature type="helix" evidence="3">
    <location>
        <begin position="30"/>
        <end position="52"/>
    </location>
</feature>
<feature type="strand" evidence="3">
    <location>
        <begin position="57"/>
        <end position="63"/>
    </location>
</feature>
<feature type="strand" evidence="3">
    <location>
        <begin position="65"/>
        <end position="67"/>
    </location>
</feature>
<feature type="strand" evidence="3">
    <location>
        <begin position="69"/>
        <end position="78"/>
    </location>
</feature>
<feature type="helix" evidence="3">
    <location>
        <begin position="79"/>
        <end position="91"/>
    </location>
</feature>
<feature type="helix" evidence="3">
    <location>
        <begin position="94"/>
        <end position="97"/>
    </location>
</feature>
<feature type="strand" evidence="3">
    <location>
        <begin position="98"/>
        <end position="110"/>
    </location>
</feature>
<feature type="strand" evidence="3">
    <location>
        <begin position="117"/>
        <end position="119"/>
    </location>
</feature>
<feature type="helix" evidence="3">
    <location>
        <begin position="121"/>
        <end position="123"/>
    </location>
</feature>
<feature type="helix" evidence="3">
    <location>
        <begin position="125"/>
        <end position="131"/>
    </location>
</feature>
<feature type="strand" evidence="3">
    <location>
        <begin position="139"/>
        <end position="148"/>
    </location>
</feature>
<feature type="helix" evidence="3">
    <location>
        <begin position="156"/>
        <end position="158"/>
    </location>
</feature>
<feature type="helix" evidence="3">
    <location>
        <begin position="161"/>
        <end position="176"/>
    </location>
</feature>
<feature type="turn" evidence="3">
    <location>
        <begin position="177"/>
        <end position="181"/>
    </location>
</feature>
<feature type="strand" evidence="3">
    <location>
        <begin position="183"/>
        <end position="188"/>
    </location>
</feature>
<feature type="turn" evidence="3">
    <location>
        <begin position="190"/>
        <end position="192"/>
    </location>
</feature>
<feature type="strand" evidence="3">
    <location>
        <begin position="193"/>
        <end position="204"/>
    </location>
</feature>
<feature type="helix" evidence="3">
    <location>
        <begin position="207"/>
        <end position="217"/>
    </location>
</feature>
<feature type="helix" evidence="3">
    <location>
        <begin position="220"/>
        <end position="225"/>
    </location>
</feature>
<feature type="strand" evidence="3">
    <location>
        <begin position="226"/>
        <end position="228"/>
    </location>
</feature>
<feature type="strand" evidence="3">
    <location>
        <begin position="232"/>
        <end position="236"/>
    </location>
</feature>
<feature type="helix" evidence="3">
    <location>
        <begin position="239"/>
        <end position="241"/>
    </location>
</feature>
<feature type="helix" evidence="3">
    <location>
        <begin position="242"/>
        <end position="245"/>
    </location>
</feature>
<sequence length="248" mass="28769">MSEAAQTLDGWYCLHDFRTIDWSAWKTLPNEEREAAISEFLALVDQWETTESEKQGSHAVYTIVGQKADILFMILRPTLDELHEIETALNKTKLADYLLPAYSYVSVVELSNYLASGSEDPYQIPEVRRRLYPILPKTNYICFYPMDKRRQGNDNWYMLSMEQRRELMRAHGMTGRKYAGKVTQIITGSVGLDDFEWGVTLFSDDALQFKKLVYEMRFDEVSARFGEFGSFFVGTRLSVEKVPSFFHV</sequence>
<proteinExistence type="evidence at protein level"/>
<keyword id="KW-0002">3D-structure</keyword>
<keyword id="KW-0349">Heme</keyword>
<keyword id="KW-0350">Heme biosynthesis</keyword>
<keyword id="KW-0408">Iron</keyword>
<keyword id="KW-0479">Metal-binding</keyword>
<keyword id="KW-0560">Oxidoreductase</keyword>
<keyword id="KW-1185">Reference proteome</keyword>